<accession>Q9MUR9</accession>
<geneLocation type="chloroplast"/>
<keyword id="KW-0004">4Fe-4S</keyword>
<keyword id="KW-0067">ATP-binding</keyword>
<keyword id="KW-0149">Chlorophyll biosynthesis</keyword>
<keyword id="KW-0150">Chloroplast</keyword>
<keyword id="KW-0408">Iron</keyword>
<keyword id="KW-0411">Iron-sulfur</keyword>
<keyword id="KW-0479">Metal-binding</keyword>
<keyword id="KW-0547">Nucleotide-binding</keyword>
<keyword id="KW-0560">Oxidoreductase</keyword>
<keyword id="KW-0602">Photosynthesis</keyword>
<keyword id="KW-0934">Plastid</keyword>
<reference key="1">
    <citation type="journal article" date="2000" name="Nature">
        <title>Ancestral chloroplast genome in Mesostigma viride reveals an early branch of green plant evolution.</title>
        <authorList>
            <person name="Lemieux C."/>
            <person name="Otis C."/>
            <person name="Turmel M."/>
        </authorList>
    </citation>
    <scope>NUCLEOTIDE SEQUENCE [LARGE SCALE GENOMIC DNA]</scope>
    <source>
        <strain>NIES-296 / KY-14 / CCMP 2046</strain>
    </source>
</reference>
<name>CHLB_MESVI</name>
<comment type="function">
    <text evidence="1">Component of the dark-operative protochlorophyllide reductase (DPOR) that uses Mg-ATP and reduced ferredoxin to reduce ring D of protochlorophyllide (Pchlide) to form chlorophyllide a (Chlide). This reaction is light-independent. The NB-protein (ChlN-ChlB) is the catalytic component of the complex.</text>
</comment>
<comment type="catalytic activity">
    <reaction evidence="1">
        <text>chlorophyllide a + oxidized 2[4Fe-4S]-[ferredoxin] + 2 ADP + 2 phosphate = protochlorophyllide a + reduced 2[4Fe-4S]-[ferredoxin] + 2 ATP + 2 H2O</text>
        <dbReference type="Rhea" id="RHEA:28202"/>
        <dbReference type="Rhea" id="RHEA-COMP:10002"/>
        <dbReference type="Rhea" id="RHEA-COMP:10004"/>
        <dbReference type="ChEBI" id="CHEBI:15377"/>
        <dbReference type="ChEBI" id="CHEBI:30616"/>
        <dbReference type="ChEBI" id="CHEBI:33722"/>
        <dbReference type="ChEBI" id="CHEBI:33723"/>
        <dbReference type="ChEBI" id="CHEBI:43474"/>
        <dbReference type="ChEBI" id="CHEBI:83348"/>
        <dbReference type="ChEBI" id="CHEBI:83350"/>
        <dbReference type="ChEBI" id="CHEBI:456216"/>
        <dbReference type="EC" id="1.3.7.7"/>
    </reaction>
</comment>
<comment type="cofactor">
    <cofactor evidence="1">
        <name>[4Fe-4S] cluster</name>
        <dbReference type="ChEBI" id="CHEBI:49883"/>
    </cofactor>
    <text evidence="1">Binds 1 [4Fe-4S] cluster per heterodimer. The cluster is bound at the heterodimer interface by residues from both subunits.</text>
</comment>
<comment type="pathway">
    <text evidence="1">Porphyrin-containing compound metabolism; chlorophyll biosynthesis (light-independent).</text>
</comment>
<comment type="subunit">
    <text evidence="1">Protochlorophyllide reductase is composed of three subunits; ChlL, ChlN and ChlB. Forms a heterotetramer of two ChlB and two ChlN subunits.</text>
</comment>
<comment type="subcellular location">
    <subcellularLocation>
        <location>Plastid</location>
        <location>Chloroplast</location>
    </subcellularLocation>
</comment>
<comment type="similarity">
    <text evidence="1">Belongs to the ChlB/BchB/BchZ family.</text>
</comment>
<organism>
    <name type="scientific">Mesostigma viride</name>
    <name type="common">Green alga</name>
    <dbReference type="NCBI Taxonomy" id="41882"/>
    <lineage>
        <taxon>Eukaryota</taxon>
        <taxon>Viridiplantae</taxon>
        <taxon>Streptophyta</taxon>
        <taxon>Mesostigmatophyceae</taxon>
        <taxon>Mesostigmatales</taxon>
        <taxon>Mesostigmataceae</taxon>
        <taxon>Mesostigma</taxon>
    </lineage>
</organism>
<protein>
    <recommendedName>
        <fullName evidence="1">Light-independent protochlorophyllide reductase subunit B</fullName>
        <shortName evidence="1">DPOR subunit B</shortName>
        <shortName evidence="1">LI-POR subunit B</shortName>
        <ecNumber evidence="1">1.3.7.7</ecNumber>
    </recommendedName>
</protein>
<gene>
    <name evidence="1" type="primary">chlB</name>
</gene>
<evidence type="ECO:0000255" key="1">
    <source>
        <dbReference type="HAMAP-Rule" id="MF_00353"/>
    </source>
</evidence>
<dbReference type="EC" id="1.3.7.7" evidence="1"/>
<dbReference type="EMBL" id="AF166114">
    <property type="protein sequence ID" value="AAF43832.1"/>
    <property type="molecule type" value="Genomic_DNA"/>
</dbReference>
<dbReference type="RefSeq" id="NP_038391.1">
    <property type="nucleotide sequence ID" value="NC_002186.1"/>
</dbReference>
<dbReference type="SMR" id="Q9MUR9"/>
<dbReference type="GeneID" id="800943"/>
<dbReference type="UniPathway" id="UPA00670"/>
<dbReference type="GO" id="GO:0009507">
    <property type="term" value="C:chloroplast"/>
    <property type="evidence" value="ECO:0007669"/>
    <property type="project" value="UniProtKB-SubCell"/>
</dbReference>
<dbReference type="GO" id="GO:0051539">
    <property type="term" value="F:4 iron, 4 sulfur cluster binding"/>
    <property type="evidence" value="ECO:0007669"/>
    <property type="project" value="UniProtKB-UniRule"/>
</dbReference>
<dbReference type="GO" id="GO:0005524">
    <property type="term" value="F:ATP binding"/>
    <property type="evidence" value="ECO:0007669"/>
    <property type="project" value="UniProtKB-UniRule"/>
</dbReference>
<dbReference type="GO" id="GO:0046872">
    <property type="term" value="F:metal ion binding"/>
    <property type="evidence" value="ECO:0007669"/>
    <property type="project" value="UniProtKB-KW"/>
</dbReference>
<dbReference type="GO" id="GO:0016730">
    <property type="term" value="F:oxidoreductase activity, acting on iron-sulfur proteins as donors"/>
    <property type="evidence" value="ECO:0007669"/>
    <property type="project" value="InterPro"/>
</dbReference>
<dbReference type="GO" id="GO:0016636">
    <property type="term" value="F:oxidoreductase activity, acting on the CH-CH group of donors, iron-sulfur protein as acceptor"/>
    <property type="evidence" value="ECO:0007669"/>
    <property type="project" value="UniProtKB-UniRule"/>
</dbReference>
<dbReference type="GO" id="GO:0036068">
    <property type="term" value="P:light-independent chlorophyll biosynthetic process"/>
    <property type="evidence" value="ECO:0007669"/>
    <property type="project" value="UniProtKB-UniRule"/>
</dbReference>
<dbReference type="GO" id="GO:0019685">
    <property type="term" value="P:photosynthesis, dark reaction"/>
    <property type="evidence" value="ECO:0007669"/>
    <property type="project" value="InterPro"/>
</dbReference>
<dbReference type="CDD" id="cd01981">
    <property type="entry name" value="Pchlide_reductase_B"/>
    <property type="match status" value="1"/>
</dbReference>
<dbReference type="Gene3D" id="1.20.89.20">
    <property type="match status" value="1"/>
</dbReference>
<dbReference type="Gene3D" id="3.40.50.1980">
    <property type="entry name" value="Nitrogenase molybdenum iron protein domain"/>
    <property type="match status" value="3"/>
</dbReference>
<dbReference type="Gene3D" id="1.10.8.550">
    <property type="entry name" value="Proto-chlorophyllide reductase 57 kD subunit B"/>
    <property type="match status" value="1"/>
</dbReference>
<dbReference type="HAMAP" id="MF_00353">
    <property type="entry name" value="ChlB_BchB"/>
    <property type="match status" value="1"/>
</dbReference>
<dbReference type="InterPro" id="IPR050152">
    <property type="entry name" value="ChlB/BchB/BchZ"/>
</dbReference>
<dbReference type="InterPro" id="IPR013580">
    <property type="entry name" value="LI-POR_suB-like_C"/>
</dbReference>
<dbReference type="InterPro" id="IPR000510">
    <property type="entry name" value="Nase/OxRdtase_comp1"/>
</dbReference>
<dbReference type="InterPro" id="IPR042298">
    <property type="entry name" value="P-CP_red_C"/>
</dbReference>
<dbReference type="InterPro" id="IPR005969">
    <property type="entry name" value="Protochl_reductB"/>
</dbReference>
<dbReference type="InterPro" id="IPR016209">
    <property type="entry name" value="Protochlorophyllide_Rdtase"/>
</dbReference>
<dbReference type="NCBIfam" id="TIGR01278">
    <property type="entry name" value="DPOR_BchB"/>
    <property type="match status" value="1"/>
</dbReference>
<dbReference type="PANTHER" id="PTHR33712">
    <property type="entry name" value="LIGHT-INDEPENDENT PROTOCHLOROPHYLLIDE REDUCTASE SUBUNIT B"/>
    <property type="match status" value="1"/>
</dbReference>
<dbReference type="PANTHER" id="PTHR33712:SF7">
    <property type="entry name" value="LIGHT-INDEPENDENT PROTOCHLOROPHYLLIDE REDUCTASE SUBUNIT B"/>
    <property type="match status" value="1"/>
</dbReference>
<dbReference type="Pfam" id="PF00148">
    <property type="entry name" value="Oxidored_nitro"/>
    <property type="match status" value="1"/>
</dbReference>
<dbReference type="Pfam" id="PF08369">
    <property type="entry name" value="PCP_red"/>
    <property type="match status" value="1"/>
</dbReference>
<dbReference type="PIRSF" id="PIRSF000163">
    <property type="entry name" value="PCP_ChlB"/>
    <property type="match status" value="1"/>
</dbReference>
<dbReference type="SUPFAM" id="SSF53807">
    <property type="entry name" value="Helical backbone' metal receptor"/>
    <property type="match status" value="1"/>
</dbReference>
<sequence>MKLAYWMYAGPAHIGTLRVASSFKNVHAIMHAPLGDDYFNVMRSMLERERDFTPVTASIVDRHVLARGSQNKVVDNITRKDKEERPDLIVLTPTCTSSILQEDLQNFVNRASMNSNSDVILADVNHYRVNELQAADRTLEQVVRFYIEKAKNNNDLDLIKTTKPSANIIGIFTLGFHNQHDCRELKRLLQDLGIQINEVIPEGGSVSNLKKLPKAWFNLVPYREVGLMTAIYLEKEFKMPYVSTTPMGVVDTGSCIKEIENIINSYTQDKISYDEYIDKQTRFVSQAAWFSRSIDCQNLTGKKAVVFGDATHAASMTRILSKEMGIYVICAGTYCTHDADWFKEQVQGYCDEVLITDNHTEVGDLIARVEPAAIFGTQMERHIGKRLNIPCGVISAPVHIQNFPLGYRPFLGYEGTNQIADLVYNSFTLGMEDHLLEIFGGHDTKEVITKGLSTDSELRWTSESENELRKIPGFVRGKIKRNTEKFARQNNVTEITVEIMYAAKEAMNA</sequence>
<proteinExistence type="inferred from homology"/>
<feature type="chain" id="PRO_0000219830" description="Light-independent protochlorophyllide reductase subunit B">
    <location>
        <begin position="1"/>
        <end position="509"/>
    </location>
</feature>
<feature type="active site" description="Proton donor" evidence="1">
    <location>
        <position position="295"/>
    </location>
</feature>
<feature type="binding site" evidence="1">
    <location>
        <position position="36"/>
    </location>
    <ligand>
        <name>[4Fe-4S] cluster</name>
        <dbReference type="ChEBI" id="CHEBI:49883"/>
        <note>ligand shared with heterodimeric partner</note>
    </ligand>
</feature>
<feature type="binding site" evidence="1">
    <location>
        <begin position="430"/>
        <end position="431"/>
    </location>
    <ligand>
        <name>substrate</name>
    </ligand>
</feature>